<keyword id="KW-0963">Cytoplasm</keyword>
<keyword id="KW-0369">Histidine metabolism</keyword>
<keyword id="KW-0378">Hydrolase</keyword>
<keyword id="KW-0408">Iron</keyword>
<keyword id="KW-0479">Metal-binding</keyword>
<keyword id="KW-0862">Zinc</keyword>
<evidence type="ECO:0000255" key="1">
    <source>
        <dbReference type="HAMAP-Rule" id="MF_00372"/>
    </source>
</evidence>
<proteinExistence type="inferred from homology"/>
<accession>A4Y1I0</accession>
<protein>
    <recommendedName>
        <fullName evidence="1">Imidazolonepropionase</fullName>
        <ecNumber evidence="1">3.5.2.7</ecNumber>
    </recommendedName>
    <alternativeName>
        <fullName evidence="1">Imidazolone-5-propionate hydrolase</fullName>
    </alternativeName>
</protein>
<organism>
    <name type="scientific">Shewanella putrefaciens (strain CN-32 / ATCC BAA-453)</name>
    <dbReference type="NCBI Taxonomy" id="319224"/>
    <lineage>
        <taxon>Bacteria</taxon>
        <taxon>Pseudomonadati</taxon>
        <taxon>Pseudomonadota</taxon>
        <taxon>Gammaproteobacteria</taxon>
        <taxon>Alteromonadales</taxon>
        <taxon>Shewanellaceae</taxon>
        <taxon>Shewanella</taxon>
    </lineage>
</organism>
<reference key="1">
    <citation type="submission" date="2007-04" db="EMBL/GenBank/DDBJ databases">
        <title>Complete sequence of Shewanella putrefaciens CN-32.</title>
        <authorList>
            <consortium name="US DOE Joint Genome Institute"/>
            <person name="Copeland A."/>
            <person name="Lucas S."/>
            <person name="Lapidus A."/>
            <person name="Barry K."/>
            <person name="Detter J.C."/>
            <person name="Glavina del Rio T."/>
            <person name="Hammon N."/>
            <person name="Israni S."/>
            <person name="Dalin E."/>
            <person name="Tice H."/>
            <person name="Pitluck S."/>
            <person name="Chain P."/>
            <person name="Malfatti S."/>
            <person name="Shin M."/>
            <person name="Vergez L."/>
            <person name="Schmutz J."/>
            <person name="Larimer F."/>
            <person name="Land M."/>
            <person name="Hauser L."/>
            <person name="Kyrpides N."/>
            <person name="Mikhailova N."/>
            <person name="Romine M.F."/>
            <person name="Fredrickson J."/>
            <person name="Tiedje J."/>
            <person name="Richardson P."/>
        </authorList>
    </citation>
    <scope>NUCLEOTIDE SEQUENCE [LARGE SCALE GENOMIC DNA]</scope>
    <source>
        <strain>CN-32 / ATCC BAA-453</strain>
    </source>
</reference>
<comment type="function">
    <text evidence="1">Catalyzes the hydrolytic cleavage of the carbon-nitrogen bond in imidazolone-5-propanoate to yield N-formimidoyl-L-glutamate. It is the third step in the universal histidine degradation pathway.</text>
</comment>
<comment type="catalytic activity">
    <reaction evidence="1">
        <text>4-imidazolone-5-propanoate + H2O = N-formimidoyl-L-glutamate</text>
        <dbReference type="Rhea" id="RHEA:23660"/>
        <dbReference type="ChEBI" id="CHEBI:15377"/>
        <dbReference type="ChEBI" id="CHEBI:58928"/>
        <dbReference type="ChEBI" id="CHEBI:77893"/>
        <dbReference type="EC" id="3.5.2.7"/>
    </reaction>
</comment>
<comment type="cofactor">
    <cofactor evidence="1">
        <name>Zn(2+)</name>
        <dbReference type="ChEBI" id="CHEBI:29105"/>
    </cofactor>
    <cofactor evidence="1">
        <name>Fe(3+)</name>
        <dbReference type="ChEBI" id="CHEBI:29034"/>
    </cofactor>
    <text evidence="1">Binds 1 zinc or iron ion per subunit.</text>
</comment>
<comment type="pathway">
    <text evidence="1">Amino-acid degradation; L-histidine degradation into L-glutamate; N-formimidoyl-L-glutamate from L-histidine: step 3/3.</text>
</comment>
<comment type="subcellular location">
    <subcellularLocation>
        <location evidence="1">Cytoplasm</location>
    </subcellularLocation>
</comment>
<comment type="similarity">
    <text evidence="1">Belongs to the metallo-dependent hydrolases superfamily. HutI family.</text>
</comment>
<dbReference type="EC" id="3.5.2.7" evidence="1"/>
<dbReference type="EMBL" id="CP000681">
    <property type="protein sequence ID" value="ABP73813.1"/>
    <property type="molecule type" value="Genomic_DNA"/>
</dbReference>
<dbReference type="SMR" id="A4Y1I0"/>
<dbReference type="STRING" id="319224.Sputcn32_0077"/>
<dbReference type="KEGG" id="spc:Sputcn32_0077"/>
<dbReference type="eggNOG" id="COG1228">
    <property type="taxonomic scope" value="Bacteria"/>
</dbReference>
<dbReference type="HOGENOM" id="CLU_041647_0_0_6"/>
<dbReference type="UniPathway" id="UPA00379">
    <property type="reaction ID" value="UER00551"/>
</dbReference>
<dbReference type="GO" id="GO:0005737">
    <property type="term" value="C:cytoplasm"/>
    <property type="evidence" value="ECO:0007669"/>
    <property type="project" value="UniProtKB-SubCell"/>
</dbReference>
<dbReference type="GO" id="GO:0050480">
    <property type="term" value="F:imidazolonepropionase activity"/>
    <property type="evidence" value="ECO:0007669"/>
    <property type="project" value="UniProtKB-UniRule"/>
</dbReference>
<dbReference type="GO" id="GO:0005506">
    <property type="term" value="F:iron ion binding"/>
    <property type="evidence" value="ECO:0007669"/>
    <property type="project" value="UniProtKB-UniRule"/>
</dbReference>
<dbReference type="GO" id="GO:0008270">
    <property type="term" value="F:zinc ion binding"/>
    <property type="evidence" value="ECO:0007669"/>
    <property type="project" value="UniProtKB-UniRule"/>
</dbReference>
<dbReference type="GO" id="GO:0019556">
    <property type="term" value="P:L-histidine catabolic process to glutamate and formamide"/>
    <property type="evidence" value="ECO:0007669"/>
    <property type="project" value="UniProtKB-UniPathway"/>
</dbReference>
<dbReference type="GO" id="GO:0019557">
    <property type="term" value="P:L-histidine catabolic process to glutamate and formate"/>
    <property type="evidence" value="ECO:0007669"/>
    <property type="project" value="UniProtKB-UniPathway"/>
</dbReference>
<dbReference type="CDD" id="cd01296">
    <property type="entry name" value="Imidazolone-5PH"/>
    <property type="match status" value="1"/>
</dbReference>
<dbReference type="FunFam" id="3.20.20.140:FF:000007">
    <property type="entry name" value="Imidazolonepropionase"/>
    <property type="match status" value="1"/>
</dbReference>
<dbReference type="Gene3D" id="3.20.20.140">
    <property type="entry name" value="Metal-dependent hydrolases"/>
    <property type="match status" value="1"/>
</dbReference>
<dbReference type="Gene3D" id="2.30.40.10">
    <property type="entry name" value="Urease, subunit C, domain 1"/>
    <property type="match status" value="1"/>
</dbReference>
<dbReference type="HAMAP" id="MF_00372">
    <property type="entry name" value="HutI"/>
    <property type="match status" value="1"/>
</dbReference>
<dbReference type="InterPro" id="IPR006680">
    <property type="entry name" value="Amidohydro-rel"/>
</dbReference>
<dbReference type="InterPro" id="IPR005920">
    <property type="entry name" value="HutI"/>
</dbReference>
<dbReference type="InterPro" id="IPR011059">
    <property type="entry name" value="Metal-dep_hydrolase_composite"/>
</dbReference>
<dbReference type="InterPro" id="IPR032466">
    <property type="entry name" value="Metal_Hydrolase"/>
</dbReference>
<dbReference type="NCBIfam" id="TIGR01224">
    <property type="entry name" value="hutI"/>
    <property type="match status" value="1"/>
</dbReference>
<dbReference type="PANTHER" id="PTHR42752">
    <property type="entry name" value="IMIDAZOLONEPROPIONASE"/>
    <property type="match status" value="1"/>
</dbReference>
<dbReference type="PANTHER" id="PTHR42752:SF1">
    <property type="entry name" value="IMIDAZOLONEPROPIONASE-RELATED"/>
    <property type="match status" value="1"/>
</dbReference>
<dbReference type="Pfam" id="PF01979">
    <property type="entry name" value="Amidohydro_1"/>
    <property type="match status" value="1"/>
</dbReference>
<dbReference type="SUPFAM" id="SSF51338">
    <property type="entry name" value="Composite domain of metallo-dependent hydrolases"/>
    <property type="match status" value="1"/>
</dbReference>
<dbReference type="SUPFAM" id="SSF51556">
    <property type="entry name" value="Metallo-dependent hydrolases"/>
    <property type="match status" value="1"/>
</dbReference>
<feature type="chain" id="PRO_1000007149" description="Imidazolonepropionase">
    <location>
        <begin position="1"/>
        <end position="408"/>
    </location>
</feature>
<feature type="binding site" evidence="1">
    <location>
        <position position="73"/>
    </location>
    <ligand>
        <name>Fe(3+)</name>
        <dbReference type="ChEBI" id="CHEBI:29034"/>
    </ligand>
</feature>
<feature type="binding site" evidence="1">
    <location>
        <position position="73"/>
    </location>
    <ligand>
        <name>Zn(2+)</name>
        <dbReference type="ChEBI" id="CHEBI:29105"/>
    </ligand>
</feature>
<feature type="binding site" evidence="1">
    <location>
        <position position="75"/>
    </location>
    <ligand>
        <name>Fe(3+)</name>
        <dbReference type="ChEBI" id="CHEBI:29034"/>
    </ligand>
</feature>
<feature type="binding site" evidence="1">
    <location>
        <position position="75"/>
    </location>
    <ligand>
        <name>Zn(2+)</name>
        <dbReference type="ChEBI" id="CHEBI:29105"/>
    </ligand>
</feature>
<feature type="binding site" evidence="1">
    <location>
        <position position="82"/>
    </location>
    <ligand>
        <name>4-imidazolone-5-propanoate</name>
        <dbReference type="ChEBI" id="CHEBI:77893"/>
    </ligand>
</feature>
<feature type="binding site" evidence="1">
    <location>
        <position position="145"/>
    </location>
    <ligand>
        <name>4-imidazolone-5-propanoate</name>
        <dbReference type="ChEBI" id="CHEBI:77893"/>
    </ligand>
</feature>
<feature type="binding site" evidence="1">
    <location>
        <position position="145"/>
    </location>
    <ligand>
        <name>N-formimidoyl-L-glutamate</name>
        <dbReference type="ChEBI" id="CHEBI:58928"/>
    </ligand>
</feature>
<feature type="binding site" evidence="1">
    <location>
        <position position="178"/>
    </location>
    <ligand>
        <name>4-imidazolone-5-propanoate</name>
        <dbReference type="ChEBI" id="CHEBI:77893"/>
    </ligand>
</feature>
<feature type="binding site" evidence="1">
    <location>
        <position position="243"/>
    </location>
    <ligand>
        <name>Fe(3+)</name>
        <dbReference type="ChEBI" id="CHEBI:29034"/>
    </ligand>
</feature>
<feature type="binding site" evidence="1">
    <location>
        <position position="243"/>
    </location>
    <ligand>
        <name>Zn(2+)</name>
        <dbReference type="ChEBI" id="CHEBI:29105"/>
    </ligand>
</feature>
<feature type="binding site" evidence="1">
    <location>
        <position position="246"/>
    </location>
    <ligand>
        <name>4-imidazolone-5-propanoate</name>
        <dbReference type="ChEBI" id="CHEBI:77893"/>
    </ligand>
</feature>
<feature type="binding site" evidence="1">
    <location>
        <position position="318"/>
    </location>
    <ligand>
        <name>Fe(3+)</name>
        <dbReference type="ChEBI" id="CHEBI:29034"/>
    </ligand>
</feature>
<feature type="binding site" evidence="1">
    <location>
        <position position="318"/>
    </location>
    <ligand>
        <name>Zn(2+)</name>
        <dbReference type="ChEBI" id="CHEBI:29105"/>
    </ligand>
</feature>
<feature type="binding site" evidence="1">
    <location>
        <position position="320"/>
    </location>
    <ligand>
        <name>N-formimidoyl-L-glutamate</name>
        <dbReference type="ChEBI" id="CHEBI:58928"/>
    </ligand>
</feature>
<feature type="binding site" evidence="1">
    <location>
        <position position="322"/>
    </location>
    <ligand>
        <name>N-formimidoyl-L-glutamate</name>
        <dbReference type="ChEBI" id="CHEBI:58928"/>
    </ligand>
</feature>
<feature type="binding site" evidence="1">
    <location>
        <position position="323"/>
    </location>
    <ligand>
        <name>4-imidazolone-5-propanoate</name>
        <dbReference type="ChEBI" id="CHEBI:77893"/>
    </ligand>
</feature>
<gene>
    <name evidence="1" type="primary">hutI</name>
    <name type="ordered locus">Sputcn32_0077</name>
</gene>
<sequence>MSWDQVWIDVNLATMDPSVSAPYGAITNAAIAVKDGKIAWLGPRSELPAFDVLSIPVYRGKGGWITPGLIDAHTHLIFAGNRANEFELRLQGASYEDIARAGGGIISTVKACREADEAELFELGRQRLNALAKEGVTTVEIKSGYGLDTETELKILRVARELGKHHHVDVKTTFLGAHAIPPEYKDNSDSYVDLIINKMLPAVIAENLADAVDVFCENIAFNLEQTERVLSAAKAAGLEIKLHAEQLTNMGGSALAARLGAKSVDHIEYLDEAGVKALSESGTCAVLLPGAFYFLRETQKPPIDLLRQYGVPMVLASDFNPGSSPICSTLLMLNMGCTLFRLTPEEALTGLTLNAAKALGIEDTVGSLVVGKQADFCLWDIATPAQLAYSYGVNPCKDVVKNGKLVHQ</sequence>
<name>HUTI_SHEPC</name>